<organism>
    <name type="scientific">Afipia carboxidovorans (strain ATCC 49405 / DSM 1227 / KCTC 32145 / OM5)</name>
    <name type="common">Oligotropha carboxidovorans</name>
    <dbReference type="NCBI Taxonomy" id="504832"/>
    <lineage>
        <taxon>Bacteria</taxon>
        <taxon>Pseudomonadati</taxon>
        <taxon>Pseudomonadota</taxon>
        <taxon>Alphaproteobacteria</taxon>
        <taxon>Hyphomicrobiales</taxon>
        <taxon>Nitrobacteraceae</taxon>
        <taxon>Afipia</taxon>
    </lineage>
</organism>
<dbReference type="EMBL" id="CP001196">
    <property type="protein sequence ID" value="ACI91649.1"/>
    <property type="molecule type" value="Genomic_DNA"/>
</dbReference>
<dbReference type="EMBL" id="CP002826">
    <property type="protein sequence ID" value="AEI04764.1"/>
    <property type="molecule type" value="Genomic_DNA"/>
</dbReference>
<dbReference type="RefSeq" id="WP_012561680.1">
    <property type="nucleotide sequence ID" value="NC_015684.1"/>
</dbReference>
<dbReference type="SMR" id="B6JCR9"/>
<dbReference type="STRING" id="504832.OCA5_c00300"/>
<dbReference type="KEGG" id="oca:OCAR_4504"/>
<dbReference type="KEGG" id="ocg:OCA5_c00300"/>
<dbReference type="PATRIC" id="fig|504832.7.peg.33"/>
<dbReference type="eggNOG" id="COG0184">
    <property type="taxonomic scope" value="Bacteria"/>
</dbReference>
<dbReference type="HOGENOM" id="CLU_148518_0_0_5"/>
<dbReference type="OrthoDB" id="9799262at2"/>
<dbReference type="Proteomes" id="UP000007730">
    <property type="component" value="Chromosome"/>
</dbReference>
<dbReference type="GO" id="GO:0022627">
    <property type="term" value="C:cytosolic small ribosomal subunit"/>
    <property type="evidence" value="ECO:0007669"/>
    <property type="project" value="TreeGrafter"/>
</dbReference>
<dbReference type="GO" id="GO:0019843">
    <property type="term" value="F:rRNA binding"/>
    <property type="evidence" value="ECO:0007669"/>
    <property type="project" value="UniProtKB-UniRule"/>
</dbReference>
<dbReference type="GO" id="GO:0003735">
    <property type="term" value="F:structural constituent of ribosome"/>
    <property type="evidence" value="ECO:0007669"/>
    <property type="project" value="InterPro"/>
</dbReference>
<dbReference type="GO" id="GO:0006412">
    <property type="term" value="P:translation"/>
    <property type="evidence" value="ECO:0007669"/>
    <property type="project" value="UniProtKB-UniRule"/>
</dbReference>
<dbReference type="CDD" id="cd00353">
    <property type="entry name" value="Ribosomal_S15p_S13e"/>
    <property type="match status" value="1"/>
</dbReference>
<dbReference type="FunFam" id="1.10.287.10:FF:000002">
    <property type="entry name" value="30S ribosomal protein S15"/>
    <property type="match status" value="1"/>
</dbReference>
<dbReference type="Gene3D" id="6.10.250.3130">
    <property type="match status" value="1"/>
</dbReference>
<dbReference type="Gene3D" id="1.10.287.10">
    <property type="entry name" value="S15/NS1, RNA-binding"/>
    <property type="match status" value="1"/>
</dbReference>
<dbReference type="HAMAP" id="MF_01343_B">
    <property type="entry name" value="Ribosomal_uS15_B"/>
    <property type="match status" value="1"/>
</dbReference>
<dbReference type="InterPro" id="IPR000589">
    <property type="entry name" value="Ribosomal_uS15"/>
</dbReference>
<dbReference type="InterPro" id="IPR005290">
    <property type="entry name" value="Ribosomal_uS15_bac-type"/>
</dbReference>
<dbReference type="InterPro" id="IPR009068">
    <property type="entry name" value="uS15_NS1_RNA-bd_sf"/>
</dbReference>
<dbReference type="NCBIfam" id="TIGR00952">
    <property type="entry name" value="S15_bact"/>
    <property type="match status" value="1"/>
</dbReference>
<dbReference type="PANTHER" id="PTHR23321">
    <property type="entry name" value="RIBOSOMAL PROTEIN S15, BACTERIAL AND ORGANELLAR"/>
    <property type="match status" value="1"/>
</dbReference>
<dbReference type="PANTHER" id="PTHR23321:SF26">
    <property type="entry name" value="SMALL RIBOSOMAL SUBUNIT PROTEIN US15M"/>
    <property type="match status" value="1"/>
</dbReference>
<dbReference type="Pfam" id="PF00312">
    <property type="entry name" value="Ribosomal_S15"/>
    <property type="match status" value="1"/>
</dbReference>
<dbReference type="SMART" id="SM01387">
    <property type="entry name" value="Ribosomal_S15"/>
    <property type="match status" value="1"/>
</dbReference>
<dbReference type="SUPFAM" id="SSF47060">
    <property type="entry name" value="S15/NS1 RNA-binding domain"/>
    <property type="match status" value="1"/>
</dbReference>
<gene>
    <name evidence="1" type="primary">rpsO</name>
    <name type="ordered locus">OCAR_4504</name>
    <name type="ordered locus">OCA5_c00300</name>
</gene>
<feature type="chain" id="PRO_1000143146" description="Small ribosomal subunit protein uS15">
    <location>
        <begin position="1"/>
        <end position="89"/>
    </location>
</feature>
<feature type="region of interest" description="Disordered" evidence="2">
    <location>
        <begin position="1"/>
        <end position="24"/>
    </location>
</feature>
<feature type="compositionally biased region" description="Basic and acidic residues" evidence="2">
    <location>
        <begin position="1"/>
        <end position="11"/>
    </location>
</feature>
<protein>
    <recommendedName>
        <fullName evidence="1">Small ribosomal subunit protein uS15</fullName>
    </recommendedName>
    <alternativeName>
        <fullName evidence="3">30S ribosomal protein S15</fullName>
    </alternativeName>
</protein>
<accession>B6JCR9</accession>
<accession>F8BZN0</accession>
<keyword id="KW-1185">Reference proteome</keyword>
<keyword id="KW-0687">Ribonucleoprotein</keyword>
<keyword id="KW-0689">Ribosomal protein</keyword>
<keyword id="KW-0694">RNA-binding</keyword>
<keyword id="KW-0699">rRNA-binding</keyword>
<comment type="function">
    <text evidence="1">One of the primary rRNA binding proteins, it binds directly to 16S rRNA where it helps nucleate assembly of the platform of the 30S subunit by binding and bridging several RNA helices of the 16S rRNA.</text>
</comment>
<comment type="function">
    <text evidence="1">Forms an intersubunit bridge (bridge B4) with the 23S rRNA of the 50S subunit in the ribosome.</text>
</comment>
<comment type="subunit">
    <text evidence="1">Part of the 30S ribosomal subunit. Forms a bridge to the 50S subunit in the 70S ribosome, contacting the 23S rRNA.</text>
</comment>
<comment type="similarity">
    <text evidence="1">Belongs to the universal ribosomal protein uS15 family.</text>
</comment>
<name>RS15_AFIC5</name>
<proteinExistence type="inferred from homology"/>
<reference key="1">
    <citation type="journal article" date="2008" name="J. Bacteriol.">
        <title>Genome sequence of the chemolithoautotrophic bacterium Oligotropha carboxidovorans OM5T.</title>
        <authorList>
            <person name="Paul D."/>
            <person name="Bridges S."/>
            <person name="Burgess S.C."/>
            <person name="Dandass Y."/>
            <person name="Lawrence M.L."/>
        </authorList>
    </citation>
    <scope>NUCLEOTIDE SEQUENCE [LARGE SCALE GENOMIC DNA]</scope>
    <source>
        <strain>ATCC 49405 / DSM 1227 / KCTC 32145 / OM5</strain>
    </source>
</reference>
<reference key="2">
    <citation type="journal article" date="2011" name="J. Bacteriol.">
        <title>Complete genome sequences of the chemolithoautotrophic Oligotropha carboxidovorans strains OM4 and OM5.</title>
        <authorList>
            <person name="Volland S."/>
            <person name="Rachinger M."/>
            <person name="Strittmatter A."/>
            <person name="Daniel R."/>
            <person name="Gottschalk G."/>
            <person name="Meyer O."/>
        </authorList>
    </citation>
    <scope>NUCLEOTIDE SEQUENCE [LARGE SCALE GENOMIC DNA]</scope>
    <source>
        <strain>ATCC 49405 / DSM 1227 / KCTC 32145 / OM5</strain>
    </source>
</reference>
<sequence>MSITAERKAEVIKTNAKKAGDTGSPEVQVAILSERIANLTEHFKTHSKDNHSRRGLLKLVSTRRSLLDYVKKKDEARYRALLEKHNIRR</sequence>
<evidence type="ECO:0000255" key="1">
    <source>
        <dbReference type="HAMAP-Rule" id="MF_01343"/>
    </source>
</evidence>
<evidence type="ECO:0000256" key="2">
    <source>
        <dbReference type="SAM" id="MobiDB-lite"/>
    </source>
</evidence>
<evidence type="ECO:0000305" key="3"/>